<accession>C4LAA1</accession>
<dbReference type="EC" id="2.4.2.4" evidence="1"/>
<dbReference type="EMBL" id="CP001616">
    <property type="protein sequence ID" value="ACQ94076.1"/>
    <property type="molecule type" value="Genomic_DNA"/>
</dbReference>
<dbReference type="RefSeq" id="WP_015879528.1">
    <property type="nucleotide sequence ID" value="NC_012691.1"/>
</dbReference>
<dbReference type="SMR" id="C4LAA1"/>
<dbReference type="STRING" id="595494.Tola_2482"/>
<dbReference type="KEGG" id="tau:Tola_2482"/>
<dbReference type="eggNOG" id="COG0213">
    <property type="taxonomic scope" value="Bacteria"/>
</dbReference>
<dbReference type="HOGENOM" id="CLU_025040_6_0_6"/>
<dbReference type="OrthoDB" id="341217at2"/>
<dbReference type="Proteomes" id="UP000009073">
    <property type="component" value="Chromosome"/>
</dbReference>
<dbReference type="GO" id="GO:0005829">
    <property type="term" value="C:cytosol"/>
    <property type="evidence" value="ECO:0007669"/>
    <property type="project" value="TreeGrafter"/>
</dbReference>
<dbReference type="GO" id="GO:0004645">
    <property type="term" value="F:1,4-alpha-oligoglucan phosphorylase activity"/>
    <property type="evidence" value="ECO:0007669"/>
    <property type="project" value="InterPro"/>
</dbReference>
<dbReference type="GO" id="GO:0009032">
    <property type="term" value="F:thymidine phosphorylase activity"/>
    <property type="evidence" value="ECO:0007669"/>
    <property type="project" value="UniProtKB-UniRule"/>
</dbReference>
<dbReference type="GO" id="GO:0006206">
    <property type="term" value="P:pyrimidine nucleobase metabolic process"/>
    <property type="evidence" value="ECO:0007669"/>
    <property type="project" value="InterPro"/>
</dbReference>
<dbReference type="GO" id="GO:0006213">
    <property type="term" value="P:pyrimidine nucleoside metabolic process"/>
    <property type="evidence" value="ECO:0007669"/>
    <property type="project" value="InterPro"/>
</dbReference>
<dbReference type="Gene3D" id="1.20.970.50">
    <property type="match status" value="1"/>
</dbReference>
<dbReference type="Gene3D" id="3.40.1030.10">
    <property type="entry name" value="Nucleoside phosphorylase/phosphoribosyltransferase catalytic domain"/>
    <property type="match status" value="1"/>
</dbReference>
<dbReference type="Gene3D" id="3.90.1170.30">
    <property type="entry name" value="Pyrimidine nucleoside phosphorylase-like, C-terminal domain"/>
    <property type="match status" value="1"/>
</dbReference>
<dbReference type="HAMAP" id="MF_00703">
    <property type="entry name" value="Thymid_phosp_2"/>
    <property type="match status" value="1"/>
</dbReference>
<dbReference type="InterPro" id="IPR000312">
    <property type="entry name" value="Glycosyl_Trfase_fam3"/>
</dbReference>
<dbReference type="InterPro" id="IPR017459">
    <property type="entry name" value="Glycosyl_Trfase_fam3_N_dom"/>
</dbReference>
<dbReference type="InterPro" id="IPR036320">
    <property type="entry name" value="Glycosyl_Trfase_fam3_N_dom_sf"/>
</dbReference>
<dbReference type="InterPro" id="IPR035902">
    <property type="entry name" value="Nuc_phospho_transferase"/>
</dbReference>
<dbReference type="InterPro" id="IPR036566">
    <property type="entry name" value="PYNP-like_C_sf"/>
</dbReference>
<dbReference type="InterPro" id="IPR013102">
    <property type="entry name" value="PYNP_C"/>
</dbReference>
<dbReference type="InterPro" id="IPR017872">
    <property type="entry name" value="Pyrmidine_PPase_CS"/>
</dbReference>
<dbReference type="InterPro" id="IPR028579">
    <property type="entry name" value="Thym_Pase_Put"/>
</dbReference>
<dbReference type="InterPro" id="IPR013466">
    <property type="entry name" value="Thymidine/AMP_Pase"/>
</dbReference>
<dbReference type="InterPro" id="IPR000053">
    <property type="entry name" value="Thymidine/pyrmidine_PPase"/>
</dbReference>
<dbReference type="NCBIfam" id="TIGR02645">
    <property type="entry name" value="ARCH_P_rylase"/>
    <property type="match status" value="1"/>
</dbReference>
<dbReference type="NCBIfam" id="NF003338">
    <property type="entry name" value="PRK04350.1"/>
    <property type="match status" value="1"/>
</dbReference>
<dbReference type="PANTHER" id="PTHR10515">
    <property type="entry name" value="THYMIDINE PHOSPHORYLASE"/>
    <property type="match status" value="1"/>
</dbReference>
<dbReference type="PANTHER" id="PTHR10515:SF0">
    <property type="entry name" value="THYMIDINE PHOSPHORYLASE"/>
    <property type="match status" value="1"/>
</dbReference>
<dbReference type="Pfam" id="PF02885">
    <property type="entry name" value="Glycos_trans_3N"/>
    <property type="match status" value="1"/>
</dbReference>
<dbReference type="Pfam" id="PF00591">
    <property type="entry name" value="Glycos_transf_3"/>
    <property type="match status" value="1"/>
</dbReference>
<dbReference type="Pfam" id="PF07831">
    <property type="entry name" value="PYNP_C"/>
    <property type="match status" value="1"/>
</dbReference>
<dbReference type="SMART" id="SM00941">
    <property type="entry name" value="PYNP_C"/>
    <property type="match status" value="1"/>
</dbReference>
<dbReference type="SUPFAM" id="SSF52418">
    <property type="entry name" value="Nucleoside phosphorylase/phosphoribosyltransferase catalytic domain"/>
    <property type="match status" value="1"/>
</dbReference>
<dbReference type="SUPFAM" id="SSF47648">
    <property type="entry name" value="Nucleoside phosphorylase/phosphoribosyltransferase N-terminal domain"/>
    <property type="match status" value="1"/>
</dbReference>
<dbReference type="SUPFAM" id="SSF54680">
    <property type="entry name" value="Pyrimidine nucleoside phosphorylase C-terminal domain"/>
    <property type="match status" value="1"/>
</dbReference>
<dbReference type="PROSITE" id="PS00647">
    <property type="entry name" value="THYMID_PHOSPHORYLASE"/>
    <property type="match status" value="1"/>
</dbReference>
<feature type="chain" id="PRO_1000212645" description="Putative thymidine phosphorylase">
    <location>
        <begin position="1"/>
        <end position="505"/>
    </location>
</feature>
<gene>
    <name type="ordered locus">Tola_2482</name>
</gene>
<reference key="1">
    <citation type="submission" date="2009-05" db="EMBL/GenBank/DDBJ databases">
        <title>Complete sequence of Tolumonas auensis DSM 9187.</title>
        <authorList>
            <consortium name="US DOE Joint Genome Institute"/>
            <person name="Lucas S."/>
            <person name="Copeland A."/>
            <person name="Lapidus A."/>
            <person name="Glavina del Rio T."/>
            <person name="Tice H."/>
            <person name="Bruce D."/>
            <person name="Goodwin L."/>
            <person name="Pitluck S."/>
            <person name="Chertkov O."/>
            <person name="Brettin T."/>
            <person name="Detter J.C."/>
            <person name="Han C."/>
            <person name="Larimer F."/>
            <person name="Land M."/>
            <person name="Hauser L."/>
            <person name="Kyrpides N."/>
            <person name="Mikhailova N."/>
            <person name="Spring S."/>
            <person name="Beller H."/>
        </authorList>
    </citation>
    <scope>NUCLEOTIDE SEQUENCE [LARGE SCALE GENOMIC DNA]</scope>
    <source>
        <strain>DSM 9187 / NBRC 110442 / TA 4</strain>
    </source>
</reference>
<evidence type="ECO:0000255" key="1">
    <source>
        <dbReference type="HAMAP-Rule" id="MF_00703"/>
    </source>
</evidence>
<sequence length="505" mass="54040">MSARITPQTPALQALRMRLHAQHQPVVLMRTDCHVCRAEGLAPRSQVLIIAGDRTVQALLYQIDSDLLKTGQIALSEAAWDALDIHEGDLVQVRHPPLLESLSAVRARIHGHRLQTTELQAIVRDVVDGRYTDVALSAFLTATAVLPLDMQETIHLTRAMVDVGDHLQWQAPIVVDKHCVGGLPGNRTTPLVVAIAAANGLVMPKTSSRAITSPAGTADTMETLAPVDLDLDTLRKVVEKEGGCVAWGGAMHLSPADDIFVRIERELDIDTQGQLIASVLSKKIAAGATHIVIDIPVGPTAKVRSRETAEHLAHHLSEVAASFGLVLRCLFTDGNQPVGRGIGPALEARDVLAVLRNEADAPQDLCDRVALVAGAVLELGGVAKEGDGIRLAHETISSGRAWEKFQRICAAQGGFREPPQALYVEPLLATTTGRAVHIDNRKLSRLAKLAGAPESSAAGIQLQVRLGDEVTSGQPLMFLHAQTSGEMAYALAYVHDIGDIVNIEP</sequence>
<organism>
    <name type="scientific">Tolumonas auensis (strain DSM 9187 / NBRC 110442 / TA 4)</name>
    <dbReference type="NCBI Taxonomy" id="595494"/>
    <lineage>
        <taxon>Bacteria</taxon>
        <taxon>Pseudomonadati</taxon>
        <taxon>Pseudomonadota</taxon>
        <taxon>Gammaproteobacteria</taxon>
        <taxon>Aeromonadales</taxon>
        <taxon>Aeromonadaceae</taxon>
        <taxon>Tolumonas</taxon>
    </lineage>
</organism>
<protein>
    <recommendedName>
        <fullName evidence="1">Putative thymidine phosphorylase</fullName>
        <ecNumber evidence="1">2.4.2.4</ecNumber>
    </recommendedName>
    <alternativeName>
        <fullName evidence="1">TdRPase</fullName>
    </alternativeName>
</protein>
<name>TYPH_TOLAT</name>
<comment type="catalytic activity">
    <reaction evidence="1">
        <text>thymidine + phosphate = 2-deoxy-alpha-D-ribose 1-phosphate + thymine</text>
        <dbReference type="Rhea" id="RHEA:16037"/>
        <dbReference type="ChEBI" id="CHEBI:17748"/>
        <dbReference type="ChEBI" id="CHEBI:17821"/>
        <dbReference type="ChEBI" id="CHEBI:43474"/>
        <dbReference type="ChEBI" id="CHEBI:57259"/>
        <dbReference type="EC" id="2.4.2.4"/>
    </reaction>
</comment>
<comment type="similarity">
    <text evidence="1">Belongs to the thymidine/pyrimidine-nucleoside phosphorylase family. Type 2 subfamily.</text>
</comment>
<keyword id="KW-0328">Glycosyltransferase</keyword>
<keyword id="KW-1185">Reference proteome</keyword>
<keyword id="KW-0808">Transferase</keyword>
<proteinExistence type="inferred from homology"/>